<reference key="1">
    <citation type="journal article" date="2003" name="Proc. Natl. Acad. Sci. U.S.A.">
        <title>The genome sequence of Blochmannia floridanus: comparative analysis of reduced genomes.</title>
        <authorList>
            <person name="Gil R."/>
            <person name="Silva F.J."/>
            <person name="Zientz E."/>
            <person name="Delmotte F."/>
            <person name="Gonzalez-Candelas F."/>
            <person name="Latorre A."/>
            <person name="Rausell C."/>
            <person name="Kamerbeek J."/>
            <person name="Gadau J."/>
            <person name="Hoelldobler B."/>
            <person name="van Ham R.C.H.J."/>
            <person name="Gross R."/>
            <person name="Moya A."/>
        </authorList>
    </citation>
    <scope>NUCLEOTIDE SEQUENCE [LARGE SCALE GENOMIC DNA]</scope>
</reference>
<keyword id="KW-0067">ATP-binding</keyword>
<keyword id="KW-0963">Cytoplasm</keyword>
<keyword id="KW-0436">Ligase</keyword>
<keyword id="KW-0547">Nucleotide-binding</keyword>
<keyword id="KW-1185">Reference proteome</keyword>
<keyword id="KW-0819">tRNA processing</keyword>
<organism>
    <name type="scientific">Blochmanniella floridana</name>
    <dbReference type="NCBI Taxonomy" id="203907"/>
    <lineage>
        <taxon>Bacteria</taxon>
        <taxon>Pseudomonadati</taxon>
        <taxon>Pseudomonadota</taxon>
        <taxon>Gammaproteobacteria</taxon>
        <taxon>Enterobacterales</taxon>
        <taxon>Enterobacteriaceae</taxon>
        <taxon>ant endosymbionts</taxon>
        <taxon>Candidatus Blochmanniella</taxon>
    </lineage>
</organism>
<proteinExistence type="inferred from homology"/>
<evidence type="ECO:0000255" key="1">
    <source>
        <dbReference type="HAMAP-Rule" id="MF_01161"/>
    </source>
</evidence>
<dbReference type="EC" id="6.3.4.19" evidence="1"/>
<dbReference type="EMBL" id="BX248583">
    <property type="protein sequence ID" value="CAD83359.1"/>
    <property type="molecule type" value="Genomic_DNA"/>
</dbReference>
<dbReference type="SMR" id="Q7VRC9"/>
<dbReference type="STRING" id="203907.Bfl288"/>
<dbReference type="KEGG" id="bfl:Bfl288"/>
<dbReference type="eggNOG" id="COG0037">
    <property type="taxonomic scope" value="Bacteria"/>
</dbReference>
<dbReference type="HOGENOM" id="CLU_018869_2_0_6"/>
<dbReference type="OrthoDB" id="9807403at2"/>
<dbReference type="Proteomes" id="UP000002192">
    <property type="component" value="Chromosome"/>
</dbReference>
<dbReference type="GO" id="GO:0005737">
    <property type="term" value="C:cytoplasm"/>
    <property type="evidence" value="ECO:0007669"/>
    <property type="project" value="UniProtKB-SubCell"/>
</dbReference>
<dbReference type="GO" id="GO:0005524">
    <property type="term" value="F:ATP binding"/>
    <property type="evidence" value="ECO:0007669"/>
    <property type="project" value="UniProtKB-UniRule"/>
</dbReference>
<dbReference type="GO" id="GO:0032267">
    <property type="term" value="F:tRNA(Ile)-lysidine synthase activity"/>
    <property type="evidence" value="ECO:0007669"/>
    <property type="project" value="UniProtKB-EC"/>
</dbReference>
<dbReference type="GO" id="GO:0006400">
    <property type="term" value="P:tRNA modification"/>
    <property type="evidence" value="ECO:0007669"/>
    <property type="project" value="UniProtKB-UniRule"/>
</dbReference>
<dbReference type="CDD" id="cd01992">
    <property type="entry name" value="TilS_N"/>
    <property type="match status" value="1"/>
</dbReference>
<dbReference type="Gene3D" id="1.20.59.20">
    <property type="match status" value="1"/>
</dbReference>
<dbReference type="Gene3D" id="3.40.50.620">
    <property type="entry name" value="HUPs"/>
    <property type="match status" value="1"/>
</dbReference>
<dbReference type="HAMAP" id="MF_01161">
    <property type="entry name" value="tRNA_Ile_lys_synt"/>
    <property type="match status" value="1"/>
</dbReference>
<dbReference type="InterPro" id="IPR012796">
    <property type="entry name" value="Lysidine-tRNA-synth_C"/>
</dbReference>
<dbReference type="InterPro" id="IPR014729">
    <property type="entry name" value="Rossmann-like_a/b/a_fold"/>
</dbReference>
<dbReference type="InterPro" id="IPR011063">
    <property type="entry name" value="TilS/TtcA_N"/>
</dbReference>
<dbReference type="InterPro" id="IPR012094">
    <property type="entry name" value="tRNA_Ile_lys_synt"/>
</dbReference>
<dbReference type="InterPro" id="IPR012795">
    <property type="entry name" value="tRNA_Ile_lys_synt_N"/>
</dbReference>
<dbReference type="InterPro" id="IPR015262">
    <property type="entry name" value="tRNA_Ile_lys_synt_subst-bd"/>
</dbReference>
<dbReference type="NCBIfam" id="TIGR02433">
    <property type="entry name" value="lysidine_TilS_C"/>
    <property type="match status" value="1"/>
</dbReference>
<dbReference type="NCBIfam" id="TIGR02432">
    <property type="entry name" value="lysidine_TilS_N"/>
    <property type="match status" value="1"/>
</dbReference>
<dbReference type="PANTHER" id="PTHR43033">
    <property type="entry name" value="TRNA(ILE)-LYSIDINE SYNTHASE-RELATED"/>
    <property type="match status" value="1"/>
</dbReference>
<dbReference type="PANTHER" id="PTHR43033:SF1">
    <property type="entry name" value="TRNA(ILE)-LYSIDINE SYNTHASE-RELATED"/>
    <property type="match status" value="1"/>
</dbReference>
<dbReference type="Pfam" id="PF01171">
    <property type="entry name" value="ATP_bind_3"/>
    <property type="match status" value="1"/>
</dbReference>
<dbReference type="Pfam" id="PF09179">
    <property type="entry name" value="TilS"/>
    <property type="match status" value="1"/>
</dbReference>
<dbReference type="Pfam" id="PF11734">
    <property type="entry name" value="TilS_C"/>
    <property type="match status" value="1"/>
</dbReference>
<dbReference type="SMART" id="SM00977">
    <property type="entry name" value="TilS_C"/>
    <property type="match status" value="1"/>
</dbReference>
<dbReference type="SUPFAM" id="SSF52402">
    <property type="entry name" value="Adenine nucleotide alpha hydrolases-like"/>
    <property type="match status" value="1"/>
</dbReference>
<dbReference type="SUPFAM" id="SSF82829">
    <property type="entry name" value="MesJ substrate recognition domain-like"/>
    <property type="match status" value="1"/>
</dbReference>
<dbReference type="SUPFAM" id="SSF56037">
    <property type="entry name" value="PheT/TilS domain"/>
    <property type="match status" value="1"/>
</dbReference>
<sequence length="531" mass="62978">MNSTNFFSHDLYLYHQVIRCIVKYRNLLLAYSGGMDSTVLLDILTKLKKYFDFQVKGTSKILPFFLRAVYVHHGLNNKADYWADHCLQQCKMRNVPFHIIYINHSDLSKIKCNIEAMARDFRYKALFNALKPEEVLLTAHHMNDQVETVLLALKRGSGPAGLSGMTQDILYQHNEYQHRLLRPLLKCSHIQLQEYAYRKKLTWVEDDTNTDVRFDRNFLRVQVIPLFQKRWPAFNKVVSRTAQLCREQENLLHELLSESLDQLIDIDNALFFYPLIKYSDVRRRVVLRYWLSRFFINMPSYKLLDCIWKEVALSKVDSQSILHVGKKYICRRFRKKLYILPDNMKSSLDIFLLPWKNFNNTILLPNELGLLTSQSLTVNLFLFYKNLIPYTHLNMLSDIFLPRYHNNVGDEKILSVCFIRPPMNNEKVSIQFGYIQGLLHLANRDRGRKLKKIWQEYNVPPWLRNHIPLLFYNDTLISAIGIFITRNGSCIVNMNNLICNNKKSIILQKITWVQSDFYYRIFKNFVYNTLR</sequence>
<comment type="function">
    <text evidence="1">Ligates lysine onto the cytidine present at position 34 of the AUA codon-specific tRNA(Ile) that contains the anticodon CAU, in an ATP-dependent manner. Cytidine is converted to lysidine, thus changing the amino acid specificity of the tRNA from methionine to isoleucine.</text>
</comment>
<comment type="catalytic activity">
    <reaction evidence="1">
        <text>cytidine(34) in tRNA(Ile2) + L-lysine + ATP = lysidine(34) in tRNA(Ile2) + AMP + diphosphate + H(+)</text>
        <dbReference type="Rhea" id="RHEA:43744"/>
        <dbReference type="Rhea" id="RHEA-COMP:10625"/>
        <dbReference type="Rhea" id="RHEA-COMP:10670"/>
        <dbReference type="ChEBI" id="CHEBI:15378"/>
        <dbReference type="ChEBI" id="CHEBI:30616"/>
        <dbReference type="ChEBI" id="CHEBI:32551"/>
        <dbReference type="ChEBI" id="CHEBI:33019"/>
        <dbReference type="ChEBI" id="CHEBI:82748"/>
        <dbReference type="ChEBI" id="CHEBI:83665"/>
        <dbReference type="ChEBI" id="CHEBI:456215"/>
        <dbReference type="EC" id="6.3.4.19"/>
    </reaction>
</comment>
<comment type="subcellular location">
    <subcellularLocation>
        <location evidence="1">Cytoplasm</location>
    </subcellularLocation>
</comment>
<comment type="domain">
    <text>The N-terminal region contains the highly conserved SGGXDS motif, predicted to be a P-loop motif involved in ATP binding.</text>
</comment>
<comment type="similarity">
    <text evidence="1">Belongs to the tRNA(Ile)-lysidine synthase family.</text>
</comment>
<gene>
    <name evidence="1" type="primary">tilS</name>
    <name type="ordered locus">Bfl288</name>
</gene>
<feature type="chain" id="PRO_0000181671" description="tRNA(Ile)-lysidine synthase">
    <location>
        <begin position="1"/>
        <end position="531"/>
    </location>
</feature>
<feature type="binding site" evidence="1">
    <location>
        <begin position="32"/>
        <end position="37"/>
    </location>
    <ligand>
        <name>ATP</name>
        <dbReference type="ChEBI" id="CHEBI:30616"/>
    </ligand>
</feature>
<accession>Q7VRC9</accession>
<protein>
    <recommendedName>
        <fullName evidence="1">tRNA(Ile)-lysidine synthase</fullName>
        <ecNumber evidence="1">6.3.4.19</ecNumber>
    </recommendedName>
    <alternativeName>
        <fullName evidence="1">tRNA(Ile)-2-lysyl-cytidine synthase</fullName>
    </alternativeName>
    <alternativeName>
        <fullName evidence="1">tRNA(Ile)-lysidine synthetase</fullName>
    </alternativeName>
</protein>
<name>TILS_BLOFL</name>